<name>CYB6_EUCGG</name>
<evidence type="ECO:0000255" key="1">
    <source>
        <dbReference type="HAMAP-Rule" id="MF_00633"/>
    </source>
</evidence>
<accession>Q49KW8</accession>
<sequence>MSKVYDWFEERLEIQAIADDITSKYVPPHVNIFYCLGGITLTCFLVQVATGFAMTFYYRPTVTEAFASVQYIMTEANFGWLIRSVHRWSASMMVLMMILHVFRVYLTGGFKKPRELTWVTGVVLAVLTASFGVTGYSLPWDQIGYWAVKIVTGVPEAIPVIGSPLVELLRGSASVGQSTLTRFYSLHTFVLPLLTAVFMLMHFLMIRKQGISGPL</sequence>
<dbReference type="EMBL" id="AY780259">
    <property type="protein sequence ID" value="AAX21057.1"/>
    <property type="molecule type" value="Genomic_DNA"/>
</dbReference>
<dbReference type="RefSeq" id="YP_636329.1">
    <property type="nucleotide sequence ID" value="NC_008115.1"/>
</dbReference>
<dbReference type="SMR" id="Q49KW8"/>
<dbReference type="GeneID" id="4108413"/>
<dbReference type="GO" id="GO:0009535">
    <property type="term" value="C:chloroplast thylakoid membrane"/>
    <property type="evidence" value="ECO:0007669"/>
    <property type="project" value="UniProtKB-SubCell"/>
</dbReference>
<dbReference type="GO" id="GO:0045158">
    <property type="term" value="F:electron transporter, transferring electrons within cytochrome b6/f complex of photosystem II activity"/>
    <property type="evidence" value="ECO:0007669"/>
    <property type="project" value="UniProtKB-UniRule"/>
</dbReference>
<dbReference type="GO" id="GO:0046872">
    <property type="term" value="F:metal ion binding"/>
    <property type="evidence" value="ECO:0007669"/>
    <property type="project" value="UniProtKB-KW"/>
</dbReference>
<dbReference type="GO" id="GO:0016491">
    <property type="term" value="F:oxidoreductase activity"/>
    <property type="evidence" value="ECO:0007669"/>
    <property type="project" value="InterPro"/>
</dbReference>
<dbReference type="GO" id="GO:0015979">
    <property type="term" value="P:photosynthesis"/>
    <property type="evidence" value="ECO:0007669"/>
    <property type="project" value="UniProtKB-UniRule"/>
</dbReference>
<dbReference type="GO" id="GO:0022904">
    <property type="term" value="P:respiratory electron transport chain"/>
    <property type="evidence" value="ECO:0007669"/>
    <property type="project" value="InterPro"/>
</dbReference>
<dbReference type="CDD" id="cd00284">
    <property type="entry name" value="Cytochrome_b_N"/>
    <property type="match status" value="1"/>
</dbReference>
<dbReference type="FunFam" id="1.20.810.10:FF:000001">
    <property type="entry name" value="Cytochrome b6"/>
    <property type="match status" value="1"/>
</dbReference>
<dbReference type="Gene3D" id="1.20.810.10">
    <property type="entry name" value="Cytochrome Bc1 Complex, Chain C"/>
    <property type="match status" value="1"/>
</dbReference>
<dbReference type="HAMAP" id="MF_00633">
    <property type="entry name" value="Cytb6_f_cytb6"/>
    <property type="match status" value="1"/>
</dbReference>
<dbReference type="InterPro" id="IPR005797">
    <property type="entry name" value="Cyt_b/b6_N"/>
</dbReference>
<dbReference type="InterPro" id="IPR023530">
    <property type="entry name" value="Cyt_B6_PetB"/>
</dbReference>
<dbReference type="InterPro" id="IPR027387">
    <property type="entry name" value="Cytb/b6-like_sf"/>
</dbReference>
<dbReference type="InterPro" id="IPR048259">
    <property type="entry name" value="Cytochrome_b_N_euk/bac"/>
</dbReference>
<dbReference type="InterPro" id="IPR016174">
    <property type="entry name" value="Di-haem_cyt_TM"/>
</dbReference>
<dbReference type="NCBIfam" id="NF002990">
    <property type="entry name" value="PRK03735.1"/>
    <property type="match status" value="1"/>
</dbReference>
<dbReference type="PANTHER" id="PTHR19271">
    <property type="entry name" value="CYTOCHROME B"/>
    <property type="match status" value="1"/>
</dbReference>
<dbReference type="PANTHER" id="PTHR19271:SF16">
    <property type="entry name" value="CYTOCHROME B"/>
    <property type="match status" value="1"/>
</dbReference>
<dbReference type="Pfam" id="PF00033">
    <property type="entry name" value="Cytochrome_B"/>
    <property type="match status" value="1"/>
</dbReference>
<dbReference type="PIRSF" id="PIRSF000032">
    <property type="entry name" value="Cytochrome_b6"/>
    <property type="match status" value="1"/>
</dbReference>
<dbReference type="SUPFAM" id="SSF81342">
    <property type="entry name" value="Transmembrane di-heme cytochromes"/>
    <property type="match status" value="1"/>
</dbReference>
<dbReference type="PROSITE" id="PS51002">
    <property type="entry name" value="CYTB_NTER"/>
    <property type="match status" value="1"/>
</dbReference>
<gene>
    <name evidence="1" type="primary">petB</name>
</gene>
<feature type="chain" id="PRO_0000275315" description="Cytochrome b6">
    <location>
        <begin position="1"/>
        <end position="215"/>
    </location>
</feature>
<feature type="transmembrane region" description="Helical" evidence="1">
    <location>
        <begin position="32"/>
        <end position="52"/>
    </location>
</feature>
<feature type="transmembrane region" description="Helical" evidence="1">
    <location>
        <begin position="90"/>
        <end position="110"/>
    </location>
</feature>
<feature type="transmembrane region" description="Helical" evidence="1">
    <location>
        <begin position="116"/>
        <end position="136"/>
    </location>
</feature>
<feature type="transmembrane region" description="Helical" evidence="1">
    <location>
        <begin position="186"/>
        <end position="206"/>
    </location>
</feature>
<feature type="binding site" description="covalent" evidence="1">
    <location>
        <position position="35"/>
    </location>
    <ligand>
        <name>heme c</name>
        <dbReference type="ChEBI" id="CHEBI:61717"/>
    </ligand>
</feature>
<feature type="binding site" description="axial binding residue" evidence="1">
    <location>
        <position position="86"/>
    </location>
    <ligand>
        <name>heme b</name>
        <dbReference type="ChEBI" id="CHEBI:60344"/>
        <label>2</label>
    </ligand>
    <ligandPart>
        <name>Fe</name>
        <dbReference type="ChEBI" id="CHEBI:18248"/>
    </ligandPart>
</feature>
<feature type="binding site" description="axial binding residue" evidence="1">
    <location>
        <position position="100"/>
    </location>
    <ligand>
        <name>heme b</name>
        <dbReference type="ChEBI" id="CHEBI:60344"/>
        <label>1</label>
    </ligand>
    <ligandPart>
        <name>Fe</name>
        <dbReference type="ChEBI" id="CHEBI:18248"/>
    </ligandPart>
</feature>
<feature type="binding site" description="axial binding residue" evidence="1">
    <location>
        <position position="187"/>
    </location>
    <ligand>
        <name>heme b</name>
        <dbReference type="ChEBI" id="CHEBI:60344"/>
        <label>2</label>
    </ligand>
    <ligandPart>
        <name>Fe</name>
        <dbReference type="ChEBI" id="CHEBI:18248"/>
    </ligandPart>
</feature>
<feature type="binding site" description="axial binding residue" evidence="1">
    <location>
        <position position="202"/>
    </location>
    <ligand>
        <name>heme b</name>
        <dbReference type="ChEBI" id="CHEBI:60344"/>
        <label>1</label>
    </ligand>
    <ligandPart>
        <name>Fe</name>
        <dbReference type="ChEBI" id="CHEBI:18248"/>
    </ligandPart>
</feature>
<protein>
    <recommendedName>
        <fullName evidence="1">Cytochrome b6</fullName>
    </recommendedName>
</protein>
<reference key="1">
    <citation type="journal article" date="2005" name="DNA Res.">
        <title>Complete nucleotide sequence of the chloroplast genome from the Tasmanian blue gum, Eucalyptus globulus (Myrtaceae).</title>
        <authorList>
            <person name="Steane D.A."/>
        </authorList>
    </citation>
    <scope>NUCLEOTIDE SEQUENCE [LARGE SCALE GENOMIC DNA]</scope>
</reference>
<keyword id="KW-0150">Chloroplast</keyword>
<keyword id="KW-0249">Electron transport</keyword>
<keyword id="KW-0349">Heme</keyword>
<keyword id="KW-0408">Iron</keyword>
<keyword id="KW-0472">Membrane</keyword>
<keyword id="KW-0479">Metal-binding</keyword>
<keyword id="KW-0602">Photosynthesis</keyword>
<keyword id="KW-0934">Plastid</keyword>
<keyword id="KW-0793">Thylakoid</keyword>
<keyword id="KW-0812">Transmembrane</keyword>
<keyword id="KW-1133">Transmembrane helix</keyword>
<keyword id="KW-0813">Transport</keyword>
<organism>
    <name type="scientific">Eucalyptus globulus subsp. globulus</name>
    <name type="common">Tasmanian blue gum</name>
    <dbReference type="NCBI Taxonomy" id="71271"/>
    <lineage>
        <taxon>Eukaryota</taxon>
        <taxon>Viridiplantae</taxon>
        <taxon>Streptophyta</taxon>
        <taxon>Embryophyta</taxon>
        <taxon>Tracheophyta</taxon>
        <taxon>Spermatophyta</taxon>
        <taxon>Magnoliopsida</taxon>
        <taxon>eudicotyledons</taxon>
        <taxon>Gunneridae</taxon>
        <taxon>Pentapetalae</taxon>
        <taxon>rosids</taxon>
        <taxon>malvids</taxon>
        <taxon>Myrtales</taxon>
        <taxon>Myrtaceae</taxon>
        <taxon>Myrtoideae</taxon>
        <taxon>Eucalypteae</taxon>
        <taxon>Eucalyptus</taxon>
    </lineage>
</organism>
<geneLocation type="chloroplast"/>
<comment type="function">
    <text evidence="1">Component of the cytochrome b6-f complex, which mediates electron transfer between photosystem II (PSII) and photosystem I (PSI), cyclic electron flow around PSI, and state transitions.</text>
</comment>
<comment type="cofactor">
    <cofactor evidence="1">
        <name>heme b</name>
        <dbReference type="ChEBI" id="CHEBI:60344"/>
    </cofactor>
    <text evidence="1">Binds 2 heme b groups non-covalently with two histidine residues as axial ligands.</text>
</comment>
<comment type="cofactor">
    <cofactor evidence="1">
        <name>heme c</name>
        <dbReference type="ChEBI" id="CHEBI:61717"/>
    </cofactor>
    <text evidence="1">Binds one heme group covalently by a single cysteine link with no axial amino acid ligand. This heme was named heme ci.</text>
</comment>
<comment type="subunit">
    <text evidence="1">The 4 large subunits of the cytochrome b6-f complex are cytochrome b6, subunit IV (17 kDa polypeptide, PetD), cytochrome f and the Rieske protein, while the 4 small subunits are PetG, PetL, PetM and PetN. The complex functions as a dimer.</text>
</comment>
<comment type="subcellular location">
    <subcellularLocation>
        <location evidence="1">Plastid</location>
        <location evidence="1">Chloroplast thylakoid membrane</location>
        <topology evidence="1">Multi-pass membrane protein</topology>
    </subcellularLocation>
</comment>
<comment type="miscellaneous">
    <text evidence="1">Heme 1 (or BH or b566) is high-potential and absorbs at about 566 nm, and heme 2 (or BL or b562) is low-potential and absorbs at about 562 nm.</text>
</comment>
<comment type="similarity">
    <text evidence="1">Belongs to the cytochrome b family. PetB subfamily.</text>
</comment>
<proteinExistence type="inferred from homology"/>